<name>RS6_MICAN</name>
<dbReference type="EMBL" id="AP009552">
    <property type="protein sequence ID" value="BAG00953.1"/>
    <property type="molecule type" value="Genomic_DNA"/>
</dbReference>
<dbReference type="RefSeq" id="WP_004163403.1">
    <property type="nucleotide sequence ID" value="NC_010296.1"/>
</dbReference>
<dbReference type="SMR" id="B0JSQ9"/>
<dbReference type="STRING" id="449447.MAE_11310"/>
<dbReference type="PaxDb" id="449447-MAE_11310"/>
<dbReference type="EnsemblBacteria" id="BAG00953">
    <property type="protein sequence ID" value="BAG00953"/>
    <property type="gene ID" value="MAE_11310"/>
</dbReference>
<dbReference type="GeneID" id="66708153"/>
<dbReference type="KEGG" id="mar:MAE_11310"/>
<dbReference type="eggNOG" id="COG0360">
    <property type="taxonomic scope" value="Bacteria"/>
</dbReference>
<dbReference type="HOGENOM" id="CLU_113441_4_0_3"/>
<dbReference type="BioCyc" id="MAER449447:MAE_RS04980-MONOMER"/>
<dbReference type="Proteomes" id="UP000001510">
    <property type="component" value="Chromosome"/>
</dbReference>
<dbReference type="GO" id="GO:0005737">
    <property type="term" value="C:cytoplasm"/>
    <property type="evidence" value="ECO:0007669"/>
    <property type="project" value="UniProtKB-ARBA"/>
</dbReference>
<dbReference type="GO" id="GO:1990904">
    <property type="term" value="C:ribonucleoprotein complex"/>
    <property type="evidence" value="ECO:0007669"/>
    <property type="project" value="UniProtKB-KW"/>
</dbReference>
<dbReference type="GO" id="GO:0005840">
    <property type="term" value="C:ribosome"/>
    <property type="evidence" value="ECO:0007669"/>
    <property type="project" value="UniProtKB-KW"/>
</dbReference>
<dbReference type="GO" id="GO:0070181">
    <property type="term" value="F:small ribosomal subunit rRNA binding"/>
    <property type="evidence" value="ECO:0007669"/>
    <property type="project" value="TreeGrafter"/>
</dbReference>
<dbReference type="GO" id="GO:0003735">
    <property type="term" value="F:structural constituent of ribosome"/>
    <property type="evidence" value="ECO:0007669"/>
    <property type="project" value="InterPro"/>
</dbReference>
<dbReference type="GO" id="GO:0006412">
    <property type="term" value="P:translation"/>
    <property type="evidence" value="ECO:0007669"/>
    <property type="project" value="UniProtKB-UniRule"/>
</dbReference>
<dbReference type="CDD" id="cd15487">
    <property type="entry name" value="bS6_chloro_cyano"/>
    <property type="match status" value="1"/>
</dbReference>
<dbReference type="Gene3D" id="3.30.70.60">
    <property type="match status" value="1"/>
</dbReference>
<dbReference type="HAMAP" id="MF_00360">
    <property type="entry name" value="Ribosomal_bS6"/>
    <property type="match status" value="1"/>
</dbReference>
<dbReference type="InterPro" id="IPR000529">
    <property type="entry name" value="Ribosomal_bS6"/>
</dbReference>
<dbReference type="InterPro" id="IPR020815">
    <property type="entry name" value="Ribosomal_bS6_CS"/>
</dbReference>
<dbReference type="InterPro" id="IPR035980">
    <property type="entry name" value="Ribosomal_bS6_sf"/>
</dbReference>
<dbReference type="InterPro" id="IPR020814">
    <property type="entry name" value="Ribosomal_S6_plastid/chlpt"/>
</dbReference>
<dbReference type="InterPro" id="IPR014717">
    <property type="entry name" value="Transl_elong_EF1B/ribsomal_bS6"/>
</dbReference>
<dbReference type="NCBIfam" id="TIGR00166">
    <property type="entry name" value="S6"/>
    <property type="match status" value="1"/>
</dbReference>
<dbReference type="PANTHER" id="PTHR21011">
    <property type="entry name" value="MITOCHONDRIAL 28S RIBOSOMAL PROTEIN S6"/>
    <property type="match status" value="1"/>
</dbReference>
<dbReference type="PANTHER" id="PTHR21011:SF1">
    <property type="entry name" value="SMALL RIBOSOMAL SUBUNIT PROTEIN BS6M"/>
    <property type="match status" value="1"/>
</dbReference>
<dbReference type="Pfam" id="PF01250">
    <property type="entry name" value="Ribosomal_S6"/>
    <property type="match status" value="1"/>
</dbReference>
<dbReference type="SUPFAM" id="SSF54995">
    <property type="entry name" value="Ribosomal protein S6"/>
    <property type="match status" value="1"/>
</dbReference>
<dbReference type="PROSITE" id="PS01048">
    <property type="entry name" value="RIBOSOMAL_S6"/>
    <property type="match status" value="1"/>
</dbReference>
<reference key="1">
    <citation type="journal article" date="2007" name="DNA Res.">
        <title>Complete genomic structure of the bloom-forming toxic cyanobacterium Microcystis aeruginosa NIES-843.</title>
        <authorList>
            <person name="Kaneko T."/>
            <person name="Nakajima N."/>
            <person name="Okamoto S."/>
            <person name="Suzuki I."/>
            <person name="Tanabe Y."/>
            <person name="Tamaoki M."/>
            <person name="Nakamura Y."/>
            <person name="Kasai F."/>
            <person name="Watanabe A."/>
            <person name="Kawashima K."/>
            <person name="Kishida Y."/>
            <person name="Ono A."/>
            <person name="Shimizu Y."/>
            <person name="Takahashi C."/>
            <person name="Minami C."/>
            <person name="Fujishiro T."/>
            <person name="Kohara M."/>
            <person name="Katoh M."/>
            <person name="Nakazaki N."/>
            <person name="Nakayama S."/>
            <person name="Yamada M."/>
            <person name="Tabata S."/>
            <person name="Watanabe M.M."/>
        </authorList>
    </citation>
    <scope>NUCLEOTIDE SEQUENCE [LARGE SCALE GENOMIC DNA]</scope>
    <source>
        <strain>NIES-843 / IAM M-247</strain>
    </source>
</reference>
<gene>
    <name evidence="1" type="primary">rpsF</name>
    <name evidence="1" type="synonym">rps6</name>
    <name type="ordered locus">MAE_11310</name>
</gene>
<accession>B0JSQ9</accession>
<comment type="function">
    <text evidence="1">Binds together with bS18 to 16S ribosomal RNA.</text>
</comment>
<comment type="similarity">
    <text evidence="1">Belongs to the bacterial ribosomal protein bS6 family.</text>
</comment>
<protein>
    <recommendedName>
        <fullName evidence="1">Small ribosomal subunit protein bS6</fullName>
    </recommendedName>
    <alternativeName>
        <fullName evidence="2">30S ribosomal protein S6</fullName>
    </alternativeName>
</protein>
<evidence type="ECO:0000255" key="1">
    <source>
        <dbReference type="HAMAP-Rule" id="MF_00360"/>
    </source>
</evidence>
<evidence type="ECO:0000305" key="2"/>
<keyword id="KW-0687">Ribonucleoprotein</keyword>
<keyword id="KW-0689">Ribosomal protein</keyword>
<keyword id="KW-0694">RNA-binding</keyword>
<keyword id="KW-0699">rRNA-binding</keyword>
<organism>
    <name type="scientific">Microcystis aeruginosa (strain NIES-843 / IAM M-2473)</name>
    <dbReference type="NCBI Taxonomy" id="449447"/>
    <lineage>
        <taxon>Bacteria</taxon>
        <taxon>Bacillati</taxon>
        <taxon>Cyanobacteriota</taxon>
        <taxon>Cyanophyceae</taxon>
        <taxon>Oscillatoriophycideae</taxon>
        <taxon>Chroococcales</taxon>
        <taxon>Microcystaceae</taxon>
        <taxon>Microcystis</taxon>
    </lineage>
</organism>
<feature type="chain" id="PRO_1000120775" description="Small ribosomal subunit protein bS6">
    <location>
        <begin position="1"/>
        <end position="129"/>
    </location>
</feature>
<proteinExistence type="inferred from homology"/>
<sequence length="129" mass="14633">MSNNYETLYILRPDLGEEVVQQQVERYRTLITEHSATDIQVKVWGKKRLAYPIKKLNDGVYVQMNYQASGKQVAPMERAMRLSDEVIRYLTLKLDRVVAPPADLSPLTEIPPSPITEAVVEDDGISAED</sequence>